<name>UPP_ACTSZ</name>
<dbReference type="EC" id="2.4.2.9" evidence="1"/>
<dbReference type="EMBL" id="CP000746">
    <property type="protein sequence ID" value="ABR75123.1"/>
    <property type="molecule type" value="Genomic_DNA"/>
</dbReference>
<dbReference type="RefSeq" id="WP_012073500.1">
    <property type="nucleotide sequence ID" value="NC_009655.1"/>
</dbReference>
<dbReference type="SMR" id="A6VQ76"/>
<dbReference type="STRING" id="339671.Asuc_1771"/>
<dbReference type="KEGG" id="asu:Asuc_1771"/>
<dbReference type="eggNOG" id="COG0035">
    <property type="taxonomic scope" value="Bacteria"/>
</dbReference>
<dbReference type="HOGENOM" id="CLU_067096_2_2_6"/>
<dbReference type="OrthoDB" id="9781675at2"/>
<dbReference type="UniPathway" id="UPA00574">
    <property type="reaction ID" value="UER00636"/>
</dbReference>
<dbReference type="Proteomes" id="UP000001114">
    <property type="component" value="Chromosome"/>
</dbReference>
<dbReference type="GO" id="GO:0005525">
    <property type="term" value="F:GTP binding"/>
    <property type="evidence" value="ECO:0007669"/>
    <property type="project" value="UniProtKB-KW"/>
</dbReference>
<dbReference type="GO" id="GO:0000287">
    <property type="term" value="F:magnesium ion binding"/>
    <property type="evidence" value="ECO:0007669"/>
    <property type="project" value="UniProtKB-UniRule"/>
</dbReference>
<dbReference type="GO" id="GO:0004845">
    <property type="term" value="F:uracil phosphoribosyltransferase activity"/>
    <property type="evidence" value="ECO:0007669"/>
    <property type="project" value="UniProtKB-UniRule"/>
</dbReference>
<dbReference type="GO" id="GO:0044206">
    <property type="term" value="P:UMP salvage"/>
    <property type="evidence" value="ECO:0007669"/>
    <property type="project" value="UniProtKB-UniRule"/>
</dbReference>
<dbReference type="GO" id="GO:0006223">
    <property type="term" value="P:uracil salvage"/>
    <property type="evidence" value="ECO:0007669"/>
    <property type="project" value="InterPro"/>
</dbReference>
<dbReference type="CDD" id="cd06223">
    <property type="entry name" value="PRTases_typeI"/>
    <property type="match status" value="1"/>
</dbReference>
<dbReference type="FunFam" id="3.40.50.2020:FF:000003">
    <property type="entry name" value="Uracil phosphoribosyltransferase"/>
    <property type="match status" value="1"/>
</dbReference>
<dbReference type="Gene3D" id="3.40.50.2020">
    <property type="match status" value="1"/>
</dbReference>
<dbReference type="HAMAP" id="MF_01218_B">
    <property type="entry name" value="Upp_B"/>
    <property type="match status" value="1"/>
</dbReference>
<dbReference type="InterPro" id="IPR000836">
    <property type="entry name" value="PRibTrfase_dom"/>
</dbReference>
<dbReference type="InterPro" id="IPR029057">
    <property type="entry name" value="PRTase-like"/>
</dbReference>
<dbReference type="InterPro" id="IPR034332">
    <property type="entry name" value="Upp_B"/>
</dbReference>
<dbReference type="InterPro" id="IPR050054">
    <property type="entry name" value="UPRTase/APRTase"/>
</dbReference>
<dbReference type="InterPro" id="IPR005765">
    <property type="entry name" value="Ura_phspho_trans"/>
</dbReference>
<dbReference type="NCBIfam" id="NF001097">
    <property type="entry name" value="PRK00129.1"/>
    <property type="match status" value="1"/>
</dbReference>
<dbReference type="NCBIfam" id="TIGR01091">
    <property type="entry name" value="upp"/>
    <property type="match status" value="1"/>
</dbReference>
<dbReference type="PANTHER" id="PTHR32315">
    <property type="entry name" value="ADENINE PHOSPHORIBOSYLTRANSFERASE"/>
    <property type="match status" value="1"/>
</dbReference>
<dbReference type="PANTHER" id="PTHR32315:SF4">
    <property type="entry name" value="URACIL PHOSPHORIBOSYLTRANSFERASE, CHLOROPLASTIC"/>
    <property type="match status" value="1"/>
</dbReference>
<dbReference type="Pfam" id="PF14681">
    <property type="entry name" value="UPRTase"/>
    <property type="match status" value="1"/>
</dbReference>
<dbReference type="SUPFAM" id="SSF53271">
    <property type="entry name" value="PRTase-like"/>
    <property type="match status" value="1"/>
</dbReference>
<proteinExistence type="inferred from homology"/>
<organism>
    <name type="scientific">Actinobacillus succinogenes (strain ATCC 55618 / DSM 22257 / CCUG 43843 / 130Z)</name>
    <dbReference type="NCBI Taxonomy" id="339671"/>
    <lineage>
        <taxon>Bacteria</taxon>
        <taxon>Pseudomonadati</taxon>
        <taxon>Pseudomonadota</taxon>
        <taxon>Gammaproteobacteria</taxon>
        <taxon>Pasteurellales</taxon>
        <taxon>Pasteurellaceae</taxon>
        <taxon>Actinobacillus</taxon>
    </lineage>
</organism>
<protein>
    <recommendedName>
        <fullName evidence="1">Uracil phosphoribosyltransferase</fullName>
        <ecNumber evidence="1">2.4.2.9</ecNumber>
    </recommendedName>
    <alternativeName>
        <fullName evidence="1">UMP pyrophosphorylase</fullName>
    </alternativeName>
    <alternativeName>
        <fullName evidence="1">UPRTase</fullName>
    </alternativeName>
</protein>
<evidence type="ECO:0000255" key="1">
    <source>
        <dbReference type="HAMAP-Rule" id="MF_01218"/>
    </source>
</evidence>
<keyword id="KW-0021">Allosteric enzyme</keyword>
<keyword id="KW-0328">Glycosyltransferase</keyword>
<keyword id="KW-0342">GTP-binding</keyword>
<keyword id="KW-0460">Magnesium</keyword>
<keyword id="KW-0547">Nucleotide-binding</keyword>
<keyword id="KW-1185">Reference proteome</keyword>
<keyword id="KW-0808">Transferase</keyword>
<feature type="chain" id="PRO_1000073127" description="Uracil phosphoribosyltransferase">
    <location>
        <begin position="1"/>
        <end position="208"/>
    </location>
</feature>
<feature type="binding site" evidence="1">
    <location>
        <position position="78"/>
    </location>
    <ligand>
        <name>5-phospho-alpha-D-ribose 1-diphosphate</name>
        <dbReference type="ChEBI" id="CHEBI:58017"/>
    </ligand>
</feature>
<feature type="binding site" evidence="1">
    <location>
        <position position="103"/>
    </location>
    <ligand>
        <name>5-phospho-alpha-D-ribose 1-diphosphate</name>
        <dbReference type="ChEBI" id="CHEBI:58017"/>
    </ligand>
</feature>
<feature type="binding site" evidence="1">
    <location>
        <begin position="130"/>
        <end position="138"/>
    </location>
    <ligand>
        <name>5-phospho-alpha-D-ribose 1-diphosphate</name>
        <dbReference type="ChEBI" id="CHEBI:58017"/>
    </ligand>
</feature>
<feature type="binding site" evidence="1">
    <location>
        <position position="193"/>
    </location>
    <ligand>
        <name>uracil</name>
        <dbReference type="ChEBI" id="CHEBI:17568"/>
    </ligand>
</feature>
<feature type="binding site" evidence="1">
    <location>
        <begin position="198"/>
        <end position="200"/>
    </location>
    <ligand>
        <name>uracil</name>
        <dbReference type="ChEBI" id="CHEBI:17568"/>
    </ligand>
</feature>
<feature type="binding site" evidence="1">
    <location>
        <position position="199"/>
    </location>
    <ligand>
        <name>5-phospho-alpha-D-ribose 1-diphosphate</name>
        <dbReference type="ChEBI" id="CHEBI:58017"/>
    </ligand>
</feature>
<comment type="function">
    <text evidence="1">Catalyzes the conversion of uracil and 5-phospho-alpha-D-ribose 1-diphosphate (PRPP) to UMP and diphosphate.</text>
</comment>
<comment type="catalytic activity">
    <reaction evidence="1">
        <text>UMP + diphosphate = 5-phospho-alpha-D-ribose 1-diphosphate + uracil</text>
        <dbReference type="Rhea" id="RHEA:13017"/>
        <dbReference type="ChEBI" id="CHEBI:17568"/>
        <dbReference type="ChEBI" id="CHEBI:33019"/>
        <dbReference type="ChEBI" id="CHEBI:57865"/>
        <dbReference type="ChEBI" id="CHEBI:58017"/>
        <dbReference type="EC" id="2.4.2.9"/>
    </reaction>
</comment>
<comment type="cofactor">
    <cofactor evidence="1">
        <name>Mg(2+)</name>
        <dbReference type="ChEBI" id="CHEBI:18420"/>
    </cofactor>
    <text evidence="1">Binds 1 Mg(2+) ion per subunit. The magnesium is bound as Mg-PRPP.</text>
</comment>
<comment type="activity regulation">
    <text evidence="1">Allosterically activated by GTP.</text>
</comment>
<comment type="pathway">
    <text evidence="1">Pyrimidine metabolism; UMP biosynthesis via salvage pathway; UMP from uracil: step 1/1.</text>
</comment>
<comment type="similarity">
    <text evidence="1">Belongs to the UPRTase family.</text>
</comment>
<accession>A6VQ76</accession>
<sequence>MKLVEVKHPLVKHKLGLMRAADISTKNFRELATEVGSLLTYEATSDLETEKVIIDGWCGDVEIDRIKGKKVTVVPILRAGLGMMDGVLEHIPSARISVVGMYRNEETLEPVPYFQKLASDLEERLAIVVDPMLATGGSMIATIDLLKQKGCKQIKVLVLVAAPEGIKALEAAHPDIEVYTASIDSHLNEQGYIVPGLGDAGDKIFGTK</sequence>
<gene>
    <name evidence="1" type="primary">upp</name>
    <name type="ordered locus">Asuc_1771</name>
</gene>
<reference key="1">
    <citation type="journal article" date="2010" name="BMC Genomics">
        <title>A genomic perspective on the potential of Actinobacillus succinogenes for industrial succinate production.</title>
        <authorList>
            <person name="McKinlay J.B."/>
            <person name="Laivenieks M."/>
            <person name="Schindler B.D."/>
            <person name="McKinlay A.A."/>
            <person name="Siddaramappa S."/>
            <person name="Challacombe J.F."/>
            <person name="Lowry S.R."/>
            <person name="Clum A."/>
            <person name="Lapidus A.L."/>
            <person name="Burkhart K.B."/>
            <person name="Harkins V."/>
            <person name="Vieille C."/>
        </authorList>
    </citation>
    <scope>NUCLEOTIDE SEQUENCE [LARGE SCALE GENOMIC DNA]</scope>
    <source>
        <strain>ATCC 55618 / DSM 22257 / CCUG 43843 / 130Z</strain>
    </source>
</reference>